<proteinExistence type="evidence at protein level"/>
<dbReference type="EMBL" id="AC120307">
    <property type="protein sequence ID" value="AAX92748.1"/>
    <property type="molecule type" value="Genomic_DNA"/>
</dbReference>
<dbReference type="EMBL" id="DP000010">
    <property type="protein sequence ID" value="ABA91492.1"/>
    <property type="molecule type" value="Genomic_DNA"/>
</dbReference>
<dbReference type="EMBL" id="AP008217">
    <property type="protein sequence ID" value="BAF27601.1"/>
    <property type="molecule type" value="Genomic_DNA"/>
</dbReference>
<dbReference type="EMBL" id="AP014967">
    <property type="protein sequence ID" value="BAT12696.1"/>
    <property type="molecule type" value="Genomic_DNA"/>
</dbReference>
<dbReference type="EMBL" id="CM000148">
    <property type="protein sequence ID" value="EAZ17449.1"/>
    <property type="molecule type" value="Genomic_DNA"/>
</dbReference>
<dbReference type="EMBL" id="AK063900">
    <property type="protein sequence ID" value="BAG88905.1"/>
    <property type="molecule type" value="mRNA"/>
</dbReference>
<dbReference type="RefSeq" id="XP_015617021.1">
    <property type="nucleotide sequence ID" value="XM_015761535.1"/>
</dbReference>
<dbReference type="FunCoup" id="Q0IUL4">
    <property type="interactions" value="2"/>
</dbReference>
<dbReference type="PaxDb" id="39947-Q0IUL4"/>
<dbReference type="EnsemblPlants" id="Os11t0149400-01">
    <property type="protein sequence ID" value="Os11t0149400-01"/>
    <property type="gene ID" value="Os11g0149400"/>
</dbReference>
<dbReference type="Gramene" id="Os11t0149400-01">
    <property type="protein sequence ID" value="Os11t0149400-01"/>
    <property type="gene ID" value="Os11g0149400"/>
</dbReference>
<dbReference type="KEGG" id="dosa:Os11g0149400"/>
<dbReference type="eggNOG" id="ENOG502S9S0">
    <property type="taxonomic scope" value="Eukaryota"/>
</dbReference>
<dbReference type="HOGENOM" id="CLU_132277_0_0_1"/>
<dbReference type="InParanoid" id="Q0IUL4"/>
<dbReference type="OMA" id="NDECLQR"/>
<dbReference type="Proteomes" id="UP000000763">
    <property type="component" value="Chromosome 11"/>
</dbReference>
<dbReference type="Proteomes" id="UP000007752">
    <property type="component" value="Chromosome 11"/>
</dbReference>
<dbReference type="Proteomes" id="UP000059680">
    <property type="component" value="Chromosome 11"/>
</dbReference>
<dbReference type="ExpressionAtlas" id="Q0IUL4">
    <property type="expression patterns" value="baseline and differential"/>
</dbReference>
<dbReference type="GO" id="GO:0005576">
    <property type="term" value="C:extracellular region"/>
    <property type="evidence" value="ECO:0007669"/>
    <property type="project" value="UniProtKB-SubCell"/>
</dbReference>
<dbReference type="GO" id="GO:0008083">
    <property type="term" value="F:growth factor activity"/>
    <property type="evidence" value="ECO:0007669"/>
    <property type="project" value="UniProtKB-KW"/>
</dbReference>
<dbReference type="GO" id="GO:0030154">
    <property type="term" value="P:cell differentiation"/>
    <property type="evidence" value="ECO:0007669"/>
    <property type="project" value="UniProtKB-KW"/>
</dbReference>
<dbReference type="GO" id="GO:0008283">
    <property type="term" value="P:cell population proliferation"/>
    <property type="evidence" value="ECO:0007669"/>
    <property type="project" value="InterPro"/>
</dbReference>
<dbReference type="InterPro" id="IPR009438">
    <property type="entry name" value="Phytosulfokine"/>
</dbReference>
<dbReference type="PANTHER" id="PTHR33285">
    <property type="entry name" value="PHYTOSULFOKINES 3"/>
    <property type="match status" value="1"/>
</dbReference>
<dbReference type="PANTHER" id="PTHR33285:SF32">
    <property type="entry name" value="PHYTOSULFOKINES 5"/>
    <property type="match status" value="1"/>
</dbReference>
<dbReference type="Pfam" id="PF06404">
    <property type="entry name" value="PSK"/>
    <property type="match status" value="1"/>
</dbReference>
<organism>
    <name type="scientific">Oryza sativa subsp. japonica</name>
    <name type="common">Rice</name>
    <dbReference type="NCBI Taxonomy" id="39947"/>
    <lineage>
        <taxon>Eukaryota</taxon>
        <taxon>Viridiplantae</taxon>
        <taxon>Streptophyta</taxon>
        <taxon>Embryophyta</taxon>
        <taxon>Tracheophyta</taxon>
        <taxon>Spermatophyta</taxon>
        <taxon>Magnoliopsida</taxon>
        <taxon>Liliopsida</taxon>
        <taxon>Poales</taxon>
        <taxon>Poaceae</taxon>
        <taxon>BOP clade</taxon>
        <taxon>Oryzoideae</taxon>
        <taxon>Oryzeae</taxon>
        <taxon>Oryzinae</taxon>
        <taxon>Oryza</taxon>
        <taxon>Oryza sativa</taxon>
    </lineage>
</organism>
<accession>Q0IUL4</accession>
<accession>B7E958</accession>
<accession>Q53PX4</accession>
<accession>Q9AR89</accession>
<reference key="1">
    <citation type="journal article" date="2005" name="BMC Biol.">
        <title>The sequence of rice chromosomes 11 and 12, rich in disease resistance genes and recent gene duplications.</title>
        <authorList>
            <consortium name="The rice chromosomes 11 and 12 sequencing consortia"/>
        </authorList>
    </citation>
    <scope>NUCLEOTIDE SEQUENCE [LARGE SCALE GENOMIC DNA]</scope>
    <source>
        <strain>cv. Nipponbare</strain>
    </source>
</reference>
<reference key="2">
    <citation type="journal article" date="2005" name="Nature">
        <title>The map-based sequence of the rice genome.</title>
        <authorList>
            <consortium name="International rice genome sequencing project (IRGSP)"/>
        </authorList>
    </citation>
    <scope>NUCLEOTIDE SEQUENCE [LARGE SCALE GENOMIC DNA]</scope>
    <source>
        <strain>cv. Nipponbare</strain>
    </source>
</reference>
<reference key="3">
    <citation type="journal article" date="2008" name="Nucleic Acids Res.">
        <title>The rice annotation project database (RAP-DB): 2008 update.</title>
        <authorList>
            <consortium name="The rice annotation project (RAP)"/>
        </authorList>
    </citation>
    <scope>GENOME REANNOTATION</scope>
    <source>
        <strain>cv. Nipponbare</strain>
    </source>
</reference>
<reference key="4">
    <citation type="journal article" date="2013" name="Rice">
        <title>Improvement of the Oryza sativa Nipponbare reference genome using next generation sequence and optical map data.</title>
        <authorList>
            <person name="Kawahara Y."/>
            <person name="de la Bastide M."/>
            <person name="Hamilton J.P."/>
            <person name="Kanamori H."/>
            <person name="McCombie W.R."/>
            <person name="Ouyang S."/>
            <person name="Schwartz D.C."/>
            <person name="Tanaka T."/>
            <person name="Wu J."/>
            <person name="Zhou S."/>
            <person name="Childs K.L."/>
            <person name="Davidson R.M."/>
            <person name="Lin H."/>
            <person name="Quesada-Ocampo L."/>
            <person name="Vaillancourt B."/>
            <person name="Sakai H."/>
            <person name="Lee S.S."/>
            <person name="Kim J."/>
            <person name="Numa H."/>
            <person name="Itoh T."/>
            <person name="Buell C.R."/>
            <person name="Matsumoto T."/>
        </authorList>
    </citation>
    <scope>GENOME REANNOTATION</scope>
    <source>
        <strain>cv. Nipponbare</strain>
    </source>
</reference>
<reference key="5">
    <citation type="journal article" date="2005" name="PLoS Biol.">
        <title>The genomes of Oryza sativa: a history of duplications.</title>
        <authorList>
            <person name="Yu J."/>
            <person name="Wang J."/>
            <person name="Lin W."/>
            <person name="Li S."/>
            <person name="Li H."/>
            <person name="Zhou J."/>
            <person name="Ni P."/>
            <person name="Dong W."/>
            <person name="Hu S."/>
            <person name="Zeng C."/>
            <person name="Zhang J."/>
            <person name="Zhang Y."/>
            <person name="Li R."/>
            <person name="Xu Z."/>
            <person name="Li S."/>
            <person name="Li X."/>
            <person name="Zheng H."/>
            <person name="Cong L."/>
            <person name="Lin L."/>
            <person name="Yin J."/>
            <person name="Geng J."/>
            <person name="Li G."/>
            <person name="Shi J."/>
            <person name="Liu J."/>
            <person name="Lv H."/>
            <person name="Li J."/>
            <person name="Wang J."/>
            <person name="Deng Y."/>
            <person name="Ran L."/>
            <person name="Shi X."/>
            <person name="Wang X."/>
            <person name="Wu Q."/>
            <person name="Li C."/>
            <person name="Ren X."/>
            <person name="Wang J."/>
            <person name="Wang X."/>
            <person name="Li D."/>
            <person name="Liu D."/>
            <person name="Zhang X."/>
            <person name="Ji Z."/>
            <person name="Zhao W."/>
            <person name="Sun Y."/>
            <person name="Zhang Z."/>
            <person name="Bao J."/>
            <person name="Han Y."/>
            <person name="Dong L."/>
            <person name="Ji J."/>
            <person name="Chen P."/>
            <person name="Wu S."/>
            <person name="Liu J."/>
            <person name="Xiao Y."/>
            <person name="Bu D."/>
            <person name="Tan J."/>
            <person name="Yang L."/>
            <person name="Ye C."/>
            <person name="Zhang J."/>
            <person name="Xu J."/>
            <person name="Zhou Y."/>
            <person name="Yu Y."/>
            <person name="Zhang B."/>
            <person name="Zhuang S."/>
            <person name="Wei H."/>
            <person name="Liu B."/>
            <person name="Lei M."/>
            <person name="Yu H."/>
            <person name="Li Y."/>
            <person name="Xu H."/>
            <person name="Wei S."/>
            <person name="He X."/>
            <person name="Fang L."/>
            <person name="Zhang Z."/>
            <person name="Zhang Y."/>
            <person name="Huang X."/>
            <person name="Su Z."/>
            <person name="Tong W."/>
            <person name="Li J."/>
            <person name="Tong Z."/>
            <person name="Li S."/>
            <person name="Ye J."/>
            <person name="Wang L."/>
            <person name="Fang L."/>
            <person name="Lei T."/>
            <person name="Chen C.-S."/>
            <person name="Chen H.-C."/>
            <person name="Xu Z."/>
            <person name="Li H."/>
            <person name="Huang H."/>
            <person name="Zhang F."/>
            <person name="Xu H."/>
            <person name="Li N."/>
            <person name="Zhao C."/>
            <person name="Li S."/>
            <person name="Dong L."/>
            <person name="Huang Y."/>
            <person name="Li L."/>
            <person name="Xi Y."/>
            <person name="Qi Q."/>
            <person name="Li W."/>
            <person name="Zhang B."/>
            <person name="Hu W."/>
            <person name="Zhang Y."/>
            <person name="Tian X."/>
            <person name="Jiao Y."/>
            <person name="Liang X."/>
            <person name="Jin J."/>
            <person name="Gao L."/>
            <person name="Zheng W."/>
            <person name="Hao B."/>
            <person name="Liu S.-M."/>
            <person name="Wang W."/>
            <person name="Yuan L."/>
            <person name="Cao M."/>
            <person name="McDermott J."/>
            <person name="Samudrala R."/>
            <person name="Wang J."/>
            <person name="Wong G.K.-S."/>
            <person name="Yang H."/>
        </authorList>
    </citation>
    <scope>NUCLEOTIDE SEQUENCE [LARGE SCALE GENOMIC DNA]</scope>
    <source>
        <strain>cv. Nipponbare</strain>
    </source>
</reference>
<reference key="6">
    <citation type="journal article" date="2003" name="Science">
        <title>Collection, mapping, and annotation of over 28,000 cDNA clones from japonica rice.</title>
        <authorList>
            <consortium name="The rice full-length cDNA consortium"/>
        </authorList>
    </citation>
    <scope>NUCLEOTIDE SEQUENCE [LARGE SCALE MRNA]</scope>
    <source>
        <strain>cv. Nipponbare</strain>
    </source>
</reference>
<reference key="7">
    <citation type="journal article" date="1997" name="Proc. Natl. Acad. Sci. U.S.A.">
        <title>Phytosulfokine-alpha, a sulfated pentapeptide, stimulates the proliferation of rice cells by means of specific high- and low-affinity binding sites.</title>
        <authorList>
            <person name="Matsubayashi Y."/>
            <person name="Takagi L."/>
            <person name="Sakagami Y."/>
        </authorList>
    </citation>
    <scope>PROTEIN SEQUENCE OF PSK-ALPHA AND PSK-BETA</scope>
    <scope>CHARACTERIZATION</scope>
    <scope>SULFATION AT TYR-110 AND TYR-112</scope>
</reference>
<keyword id="KW-0217">Developmental protein</keyword>
<keyword id="KW-0221">Differentiation</keyword>
<keyword id="KW-0903">Direct protein sequencing</keyword>
<keyword id="KW-0339">Growth factor</keyword>
<keyword id="KW-1185">Reference proteome</keyword>
<keyword id="KW-0964">Secreted</keyword>
<keyword id="KW-0732">Signal</keyword>
<keyword id="KW-0765">Sulfation</keyword>
<name>PSK2_ORYSJ</name>
<protein>
    <recommendedName>
        <fullName>Phytosulfokines 2</fullName>
    </recommendedName>
    <component>
        <recommendedName>
            <fullName>Phytosulfokine-alpha</fullName>
            <shortName>PSK-alpha</shortName>
            <shortName>Phytosulfokine-a</shortName>
        </recommendedName>
    </component>
    <component>
        <recommendedName>
            <fullName>Phytosulfokine-beta</fullName>
            <shortName>PSK-beta</shortName>
            <shortName>Phytosulfokine-b</shortName>
        </recommendedName>
    </component>
</protein>
<feature type="signal peptide" evidence="2">
    <location>
        <begin position="1"/>
        <end position="34"/>
    </location>
</feature>
<feature type="propeptide" id="PRO_0000024065" evidence="2">
    <location>
        <begin position="35"/>
        <end position="109"/>
    </location>
</feature>
<feature type="peptide" id="PRO_0000024066" description="Phytosulfokine-alpha" evidence="3">
    <location>
        <begin position="110"/>
        <end position="114"/>
    </location>
</feature>
<feature type="peptide" id="PRO_0000024067" description="Phytosulfokine-beta" evidence="3">
    <location>
        <begin position="110"/>
        <end position="113"/>
    </location>
</feature>
<feature type="propeptide" id="PRO_0000024068" evidence="2">
    <location>
        <begin position="115"/>
        <end position="119"/>
    </location>
</feature>
<feature type="modified residue" description="Sulfotyrosine" evidence="3">
    <location>
        <position position="110"/>
    </location>
</feature>
<feature type="modified residue" description="Sulfotyrosine" evidence="3">
    <location>
        <position position="112"/>
    </location>
</feature>
<evidence type="ECO:0000250" key="1"/>
<evidence type="ECO:0000255" key="2"/>
<evidence type="ECO:0000269" key="3">
    <source>
    </source>
</evidence>
<evidence type="ECO:0000305" key="4"/>
<gene>
    <name type="primary">PSK2</name>
    <name type="ordered locus">Os11g0149400</name>
    <name type="ordered locus">LOC_Os11g05190</name>
    <name type="ORF">OsJ_031658</name>
</gene>
<comment type="function">
    <text>Promotes plant cell differentiation, organogenesis and somatic embryogenesis as well as cell proliferation.</text>
</comment>
<comment type="subcellular location">
    <subcellularLocation>
        <location evidence="1">Secreted</location>
    </subcellularLocation>
</comment>
<comment type="PTM">
    <text evidence="3">Sulfation is important for activity and for the binding to a putative membrane receptor.</text>
</comment>
<comment type="PTM">
    <text>PSK-alpha is produced by endopeptidase digestion. PSK-beta is produced from PSK-alpha by exopeptidase digestion.</text>
</comment>
<comment type="similarity">
    <text evidence="4">Belongs to the phytosulfokine family.</text>
</comment>
<sequence length="119" mass="12624">MSTTRGVSSSSAAAALALLLLFALCFFSFHFAAAARAVPRDEHQENGGVKAVAAVAADQLVLQLEGDTGNGDEVSELMGAAEEEAAACEEGKNNDECVQRRLLSDAHLDYIYTQHKNKP</sequence>